<reference evidence="7" key="1">
    <citation type="journal article" date="2007" name="Nature">
        <title>Evolution of genes and genomes on the Drosophila phylogeny.</title>
        <authorList>
            <consortium name="Drosophila 12 genomes consortium"/>
        </authorList>
    </citation>
    <scope>NUCLEOTIDE SEQUENCE [LARGE SCALE GENOMIC DNA]</scope>
    <source>
        <strain evidence="7">Tucson 14024-0371.13</strain>
    </source>
</reference>
<feature type="chain" id="PRO_0000408236" description="Sensory neuron membrane protein 1">
    <location>
        <begin position="1"/>
        <end position="538"/>
    </location>
</feature>
<feature type="topological domain" description="Cytoplasmic" evidence="4">
    <location>
        <begin position="1"/>
        <end position="7"/>
    </location>
</feature>
<feature type="transmembrane region" description="Helical" evidence="4">
    <location>
        <begin position="8"/>
        <end position="28"/>
    </location>
</feature>
<feature type="topological domain" description="Extracellular" evidence="4">
    <location>
        <begin position="29"/>
        <end position="460"/>
    </location>
</feature>
<feature type="transmembrane region" description="Helical" evidence="4">
    <location>
        <begin position="461"/>
        <end position="481"/>
    </location>
</feature>
<feature type="topological domain" description="Cytoplasmic" evidence="4">
    <location>
        <begin position="482"/>
        <end position="538"/>
    </location>
</feature>
<feature type="region of interest" description="Disordered" evidence="5">
    <location>
        <begin position="501"/>
        <end position="538"/>
    </location>
</feature>
<feature type="glycosylation site" description="N-linked (GlcNAc...) asparagine" evidence="4">
    <location>
        <position position="66"/>
    </location>
</feature>
<feature type="glycosylation site" description="N-linked (GlcNAc...) asparagine" evidence="4">
    <location>
        <position position="213"/>
    </location>
</feature>
<feature type="glycosylation site" description="N-linked (GlcNAc...) asparagine" evidence="4">
    <location>
        <position position="226"/>
    </location>
</feature>
<feature type="glycosylation site" description="N-linked (GlcNAc...) asparagine" evidence="4">
    <location>
        <position position="441"/>
    </location>
</feature>
<feature type="disulfide bond" evidence="2">
    <location>
        <begin position="266"/>
        <end position="331"/>
    </location>
</feature>
<feature type="disulfide bond" evidence="2">
    <location>
        <begin position="295"/>
        <end position="353"/>
    </location>
</feature>
<feature type="disulfide bond" evidence="2">
    <location>
        <begin position="333"/>
        <end position="342"/>
    </location>
</feature>
<sequence length="538" mass="60347">MNVHRTKLLGASAGVFLFAIIYGWVIFPKILRFMISKQVTLKPGTDIRDLWSNTPFPLHFYIYVFNVTNPDEVTAGGKPRLQEVGPFVFDEWKDKYDLEDDVQEDTVSFTMRNTFIFNQKETLPLTGEEELVIPHPIMQPGGIMVQREKAAMMELAAKGLSIVFPDAKAFIKGRFMDIFFRGMDVDCSSDEFSAKALCSVFYTGEVKQAKQVNQTHFLFSFLGQANHSDAGRFTVCRGVKNNKKLGMVVKFADEPELAIWPDGGECNNFVGTDSTVFPPGLKKEEGLWAFTPDLCRSLGAFYQRKSSYHGMPSMRYSLDLGDARADESLHCFCDDPEDLDTCPPKGTMNLAPCVNGPLIASMPHFYNADPKLVADVEGLNPNEKDHAVYIDFELMSGTPFQAAKRLQFNLDMEPVEGIEAMRGLPKLILPLFWVEEGVHLNKTFTNMVKYTLFLGLKINSGLRWLLIMLSFVGLGSAGFLFYQNSDSLDITLPPKIIKETNNKVADSNKPNEPPHFAADTSIPGTNPPNAKSEKRERY</sequence>
<organism>
    <name type="scientific">Drosophila ananassae</name>
    <name type="common">Fruit fly</name>
    <dbReference type="NCBI Taxonomy" id="7217"/>
    <lineage>
        <taxon>Eukaryota</taxon>
        <taxon>Metazoa</taxon>
        <taxon>Ecdysozoa</taxon>
        <taxon>Arthropoda</taxon>
        <taxon>Hexapoda</taxon>
        <taxon>Insecta</taxon>
        <taxon>Pterygota</taxon>
        <taxon>Neoptera</taxon>
        <taxon>Endopterygota</taxon>
        <taxon>Diptera</taxon>
        <taxon>Brachycera</taxon>
        <taxon>Muscomorpha</taxon>
        <taxon>Ephydroidea</taxon>
        <taxon>Drosophilidae</taxon>
        <taxon>Drosophila</taxon>
        <taxon>Sophophora</taxon>
    </lineage>
</organism>
<comment type="function">
    <text evidence="3">Plays an olfactory role that is not restricted to pheromone sensitivity.</text>
</comment>
<comment type="subcellular location">
    <subcellularLocation>
        <location evidence="1">Cell membrane</location>
        <topology evidence="1">Multi-pass membrane protein</topology>
    </subcellularLocation>
</comment>
<comment type="similarity">
    <text evidence="6">Belongs to the CD36 family.</text>
</comment>
<keyword id="KW-1003">Cell membrane</keyword>
<keyword id="KW-1015">Disulfide bond</keyword>
<keyword id="KW-0325">Glycoprotein</keyword>
<keyword id="KW-0472">Membrane</keyword>
<keyword id="KW-0552">Olfaction</keyword>
<keyword id="KW-0675">Receptor</keyword>
<keyword id="KW-1185">Reference proteome</keyword>
<keyword id="KW-0716">Sensory transduction</keyword>
<keyword id="KW-0812">Transmembrane</keyword>
<keyword id="KW-1133">Transmembrane helix</keyword>
<protein>
    <recommendedName>
        <fullName evidence="3">Sensory neuron membrane protein 1</fullName>
    </recommendedName>
</protein>
<accession>B3MTS2</accession>
<dbReference type="EMBL" id="CH902623">
    <property type="protein sequence ID" value="EDV30203.1"/>
    <property type="molecule type" value="Genomic_DNA"/>
</dbReference>
<dbReference type="SMR" id="B3MTS2"/>
<dbReference type="FunCoup" id="B3MTS2">
    <property type="interactions" value="1"/>
</dbReference>
<dbReference type="STRING" id="7217.B3MTS2"/>
<dbReference type="GlyCosmos" id="B3MTS2">
    <property type="glycosylation" value="4 sites, No reported glycans"/>
</dbReference>
<dbReference type="EnsemblMetazoa" id="FBtr0127767">
    <property type="protein sequence ID" value="FBpp0126259"/>
    <property type="gene ID" value="FBgn0100061"/>
</dbReference>
<dbReference type="EnsemblMetazoa" id="XM_001964371.4">
    <property type="protein sequence ID" value="XP_001964407.1"/>
    <property type="gene ID" value="LOC6505713"/>
</dbReference>
<dbReference type="GeneID" id="6505713"/>
<dbReference type="KEGG" id="dan:6505713"/>
<dbReference type="CTD" id="42514"/>
<dbReference type="eggNOG" id="KOG3776">
    <property type="taxonomic scope" value="Eukaryota"/>
</dbReference>
<dbReference type="HOGENOM" id="CLU_019853_1_2_1"/>
<dbReference type="InParanoid" id="B3MTS2"/>
<dbReference type="OMA" id="QRKSSYH"/>
<dbReference type="OrthoDB" id="10024078at2759"/>
<dbReference type="PhylomeDB" id="B3MTS2"/>
<dbReference type="ChiTaRS" id="Snmp1">
    <property type="organism name" value="fly"/>
</dbReference>
<dbReference type="Proteomes" id="UP000007801">
    <property type="component" value="Unassembled WGS sequence"/>
</dbReference>
<dbReference type="GO" id="GO:0005929">
    <property type="term" value="C:cilium"/>
    <property type="evidence" value="ECO:0007669"/>
    <property type="project" value="EnsemblMetazoa"/>
</dbReference>
<dbReference type="GO" id="GO:0005737">
    <property type="term" value="C:cytoplasm"/>
    <property type="evidence" value="ECO:0007669"/>
    <property type="project" value="TreeGrafter"/>
</dbReference>
<dbReference type="GO" id="GO:0030425">
    <property type="term" value="C:dendrite"/>
    <property type="evidence" value="ECO:0007669"/>
    <property type="project" value="EnsemblMetazoa"/>
</dbReference>
<dbReference type="GO" id="GO:0043025">
    <property type="term" value="C:neuronal cell body"/>
    <property type="evidence" value="ECO:0007669"/>
    <property type="project" value="EnsemblMetazoa"/>
</dbReference>
<dbReference type="GO" id="GO:0005886">
    <property type="term" value="C:plasma membrane"/>
    <property type="evidence" value="ECO:0007669"/>
    <property type="project" value="UniProtKB-SubCell"/>
</dbReference>
<dbReference type="GO" id="GO:0005044">
    <property type="term" value="F:scavenger receptor activity"/>
    <property type="evidence" value="ECO:0007669"/>
    <property type="project" value="TreeGrafter"/>
</dbReference>
<dbReference type="GO" id="GO:0007166">
    <property type="term" value="P:cell surface receptor signaling pathway"/>
    <property type="evidence" value="ECO:0007669"/>
    <property type="project" value="EnsemblMetazoa"/>
</dbReference>
<dbReference type="GO" id="GO:0071444">
    <property type="term" value="P:cellular response to pheromone"/>
    <property type="evidence" value="ECO:0007669"/>
    <property type="project" value="EnsemblMetazoa"/>
</dbReference>
<dbReference type="GO" id="GO:0050911">
    <property type="term" value="P:detection of chemical stimulus involved in sensory perception of smell"/>
    <property type="evidence" value="ECO:0007669"/>
    <property type="project" value="EnsemblMetazoa"/>
</dbReference>
<dbReference type="GO" id="GO:0055088">
    <property type="term" value="P:lipid homeostasis"/>
    <property type="evidence" value="ECO:0007669"/>
    <property type="project" value="EnsemblMetazoa"/>
</dbReference>
<dbReference type="GO" id="GO:0035073">
    <property type="term" value="P:pupariation"/>
    <property type="evidence" value="ECO:0007669"/>
    <property type="project" value="EnsemblMetazoa"/>
</dbReference>
<dbReference type="InterPro" id="IPR002159">
    <property type="entry name" value="CD36_fam"/>
</dbReference>
<dbReference type="PANTHER" id="PTHR11923">
    <property type="entry name" value="SCAVENGER RECEPTOR CLASS B TYPE-1 SR-B1"/>
    <property type="match status" value="1"/>
</dbReference>
<dbReference type="PANTHER" id="PTHR11923:SF69">
    <property type="entry name" value="SENSORY NEURON MEMBRANE PROTEIN 1"/>
    <property type="match status" value="1"/>
</dbReference>
<dbReference type="Pfam" id="PF01130">
    <property type="entry name" value="CD36"/>
    <property type="match status" value="1"/>
</dbReference>
<dbReference type="PRINTS" id="PR01609">
    <property type="entry name" value="CD36FAMILY"/>
</dbReference>
<name>SNMP1_DROAN</name>
<gene>
    <name evidence="3" type="primary">Snmp1</name>
    <name type="ORF">GF23067</name>
</gene>
<proteinExistence type="inferred from homology"/>
<evidence type="ECO:0000250" key="1">
    <source>
        <dbReference type="UniProtKB" id="O02351"/>
    </source>
</evidence>
<evidence type="ECO:0000250" key="2">
    <source>
        <dbReference type="UniProtKB" id="P26201"/>
    </source>
</evidence>
<evidence type="ECO:0000250" key="3">
    <source>
        <dbReference type="UniProtKB" id="Q9VDD3"/>
    </source>
</evidence>
<evidence type="ECO:0000255" key="4"/>
<evidence type="ECO:0000256" key="5">
    <source>
        <dbReference type="SAM" id="MobiDB-lite"/>
    </source>
</evidence>
<evidence type="ECO:0000305" key="6"/>
<evidence type="ECO:0000312" key="7">
    <source>
        <dbReference type="EMBL" id="EDV30203.1"/>
    </source>
</evidence>